<name>TBL41_ARATH</name>
<accession>F4IWA8</accession>
<accession>B9DI65</accession>
<accession>Q8W4B3</accession>
<accession>Q9LH70</accession>
<proteinExistence type="evidence at transcript level"/>
<protein>
    <recommendedName>
        <fullName>Protein trichome birefringence-like 41</fullName>
    </recommendedName>
</protein>
<organism>
    <name type="scientific">Arabidopsis thaliana</name>
    <name type="common">Mouse-ear cress</name>
    <dbReference type="NCBI Taxonomy" id="3702"/>
    <lineage>
        <taxon>Eukaryota</taxon>
        <taxon>Viridiplantae</taxon>
        <taxon>Streptophyta</taxon>
        <taxon>Embryophyta</taxon>
        <taxon>Tracheophyta</taxon>
        <taxon>Spermatophyta</taxon>
        <taxon>Magnoliopsida</taxon>
        <taxon>eudicotyledons</taxon>
        <taxon>Gunneridae</taxon>
        <taxon>Pentapetalae</taxon>
        <taxon>rosids</taxon>
        <taxon>malvids</taxon>
        <taxon>Brassicales</taxon>
        <taxon>Brassicaceae</taxon>
        <taxon>Camelineae</taxon>
        <taxon>Arabidopsis</taxon>
    </lineage>
</organism>
<keyword id="KW-0025">Alternative splicing</keyword>
<keyword id="KW-0472">Membrane</keyword>
<keyword id="KW-1185">Reference proteome</keyword>
<keyword id="KW-0735">Signal-anchor</keyword>
<keyword id="KW-0812">Transmembrane</keyword>
<keyword id="KW-1133">Transmembrane helix</keyword>
<dbReference type="EMBL" id="AP002061">
    <property type="protein sequence ID" value="BAB02651.1"/>
    <property type="status" value="ALT_SEQ"/>
    <property type="molecule type" value="Genomic_DNA"/>
</dbReference>
<dbReference type="EMBL" id="CP002686">
    <property type="protein sequence ID" value="AEE75575.1"/>
    <property type="molecule type" value="Genomic_DNA"/>
</dbReference>
<dbReference type="EMBL" id="CP002686">
    <property type="protein sequence ID" value="AEE75576.1"/>
    <property type="molecule type" value="Genomic_DNA"/>
</dbReference>
<dbReference type="EMBL" id="AY062682">
    <property type="protein sequence ID" value="AAL32760.1"/>
    <property type="molecule type" value="mRNA"/>
</dbReference>
<dbReference type="EMBL" id="AY093337">
    <property type="protein sequence ID" value="AAM13336.1"/>
    <property type="molecule type" value="mRNA"/>
</dbReference>
<dbReference type="EMBL" id="AK317777">
    <property type="protein sequence ID" value="BAH20432.1"/>
    <property type="molecule type" value="mRNA"/>
</dbReference>
<dbReference type="RefSeq" id="NP_188103.2">
    <molecule id="F4IWA8-2"/>
    <property type="nucleotide sequence ID" value="NM_112347.4"/>
</dbReference>
<dbReference type="RefSeq" id="NP_974314.2">
    <molecule id="F4IWA8-1"/>
    <property type="nucleotide sequence ID" value="NM_202585.3"/>
</dbReference>
<dbReference type="SMR" id="F4IWA8"/>
<dbReference type="BioGRID" id="6048">
    <property type="interactions" value="2"/>
</dbReference>
<dbReference type="FunCoup" id="F4IWA8">
    <property type="interactions" value="38"/>
</dbReference>
<dbReference type="IntAct" id="F4IWA8">
    <property type="interactions" value="2"/>
</dbReference>
<dbReference type="STRING" id="3702.F4IWA8"/>
<dbReference type="PaxDb" id="3702-AT3G14850.2"/>
<dbReference type="ProteomicsDB" id="234242">
    <molecule id="F4IWA8-1"/>
</dbReference>
<dbReference type="EnsemblPlants" id="AT3G14850.1">
    <molecule id="F4IWA8-2"/>
    <property type="protein sequence ID" value="AT3G14850.1"/>
    <property type="gene ID" value="AT3G14850"/>
</dbReference>
<dbReference type="EnsemblPlants" id="AT3G14850.2">
    <molecule id="F4IWA8-1"/>
    <property type="protein sequence ID" value="AT3G14850.2"/>
    <property type="gene ID" value="AT3G14850"/>
</dbReference>
<dbReference type="GeneID" id="820714"/>
<dbReference type="Gramene" id="AT3G14850.1">
    <molecule id="F4IWA8-2"/>
    <property type="protein sequence ID" value="AT3G14850.1"/>
    <property type="gene ID" value="AT3G14850"/>
</dbReference>
<dbReference type="Gramene" id="AT3G14850.2">
    <molecule id="F4IWA8-1"/>
    <property type="protein sequence ID" value="AT3G14850.2"/>
    <property type="gene ID" value="AT3G14850"/>
</dbReference>
<dbReference type="KEGG" id="ath:AT3G14850"/>
<dbReference type="Araport" id="AT3G14850"/>
<dbReference type="TAIR" id="AT3G14850">
    <property type="gene designation" value="TBL41"/>
</dbReference>
<dbReference type="eggNOG" id="ENOG502QVJM">
    <property type="taxonomic scope" value="Eukaryota"/>
</dbReference>
<dbReference type="InParanoid" id="F4IWA8"/>
<dbReference type="OMA" id="RANAENC"/>
<dbReference type="OrthoDB" id="630188at2759"/>
<dbReference type="PhylomeDB" id="F4IWA8"/>
<dbReference type="PRO" id="PR:F4IWA8"/>
<dbReference type="Proteomes" id="UP000006548">
    <property type="component" value="Chromosome 3"/>
</dbReference>
<dbReference type="ExpressionAtlas" id="F4IWA8">
    <property type="expression patterns" value="baseline and differential"/>
</dbReference>
<dbReference type="GO" id="GO:0016020">
    <property type="term" value="C:membrane"/>
    <property type="evidence" value="ECO:0007669"/>
    <property type="project" value="UniProtKB-SubCell"/>
</dbReference>
<dbReference type="GO" id="GO:0016413">
    <property type="term" value="F:O-acetyltransferase activity"/>
    <property type="evidence" value="ECO:0007669"/>
    <property type="project" value="InterPro"/>
</dbReference>
<dbReference type="InterPro" id="IPR029962">
    <property type="entry name" value="TBL"/>
</dbReference>
<dbReference type="InterPro" id="IPR026057">
    <property type="entry name" value="TBL_C"/>
</dbReference>
<dbReference type="InterPro" id="IPR025846">
    <property type="entry name" value="TBL_N"/>
</dbReference>
<dbReference type="PANTHER" id="PTHR32285:SF58">
    <property type="entry name" value="PROTEIN TRICHOME BIREFRINGENCE-LIKE 41"/>
    <property type="match status" value="1"/>
</dbReference>
<dbReference type="PANTHER" id="PTHR32285">
    <property type="entry name" value="PROTEIN TRICHOME BIREFRINGENCE-LIKE 9-RELATED"/>
    <property type="match status" value="1"/>
</dbReference>
<dbReference type="Pfam" id="PF13839">
    <property type="entry name" value="PC-Esterase"/>
    <property type="match status" value="1"/>
</dbReference>
<dbReference type="Pfam" id="PF14416">
    <property type="entry name" value="PMR5N"/>
    <property type="match status" value="1"/>
</dbReference>
<evidence type="ECO:0000250" key="1">
    <source>
        <dbReference type="UniProtKB" id="Q9FG35"/>
    </source>
</evidence>
<evidence type="ECO:0000250" key="2">
    <source>
        <dbReference type="UniProtKB" id="Q9LY46"/>
    </source>
</evidence>
<evidence type="ECO:0000255" key="3"/>
<evidence type="ECO:0000303" key="4">
    <source>
    </source>
</evidence>
<evidence type="ECO:0000305" key="5"/>
<evidence type="ECO:0000305" key="6">
    <source>
    </source>
</evidence>
<sequence length="356" mass="40111">MGSKDNAISNDSALVLSLLLLLLLPLLHEAAEGCDMFTGRWVKDDSYPLYNSSTCPFIRHEFSCQRNGRPDLDYSTFRWQPLSCKLARFNGLQFLKKNKGKKIMFVGDSLSLNQWQSLACMLHSSVPNSTYTLTTQGSISTYTFKEYGLELKLDRNVYLVDIVREKIGRVLKLDSINDGKNWVEMDTLIFNTWHWWSRRGPAQPWDLIQIGTNVTKDMDRVAAFEIALGTWGKWVDTVLNTKKTRVFFQGISPSHYKGVLWGEPAAKSCVGQKEPLLGTKYPGGLPAEVGVLKRALGKISKPVTLLDITMLSLLRKDAHPSVYGLGGRNSSGDCSHWCLSGVPDTWNEILYNYMVE</sequence>
<comment type="function">
    <text evidence="1 2">May act as a bridging protein that binds pectin and other cell wall polysaccharides. Probably involved in maintaining esterification of pectins (By similarity). May be involved in the specific O-acetylation of cell wall polymers (By similarity).</text>
</comment>
<comment type="subcellular location">
    <subcellularLocation>
        <location evidence="5">Membrane</location>
        <topology evidence="5">Single-pass type II membrane protein</topology>
    </subcellularLocation>
</comment>
<comment type="alternative products">
    <event type="alternative splicing"/>
    <isoform>
        <id>F4IWA8-1</id>
        <name>1</name>
        <sequence type="displayed"/>
    </isoform>
    <isoform>
        <id>F4IWA8-2</id>
        <name>2</name>
        <sequence type="described" ref="VSP_053696"/>
    </isoform>
</comment>
<comment type="miscellaneous">
    <text evidence="6">Contains 2 motifs that are conserved in esterases, but it is unlikely that this protein belongs to the catalytically active pectin esterases.</text>
</comment>
<comment type="similarity">
    <text evidence="5">Belongs to the PC-esterase family. TBL subfamily.</text>
</comment>
<comment type="sequence caution" evidence="5">
    <conflict type="erroneous gene model prediction">
        <sequence resource="EMBL-CDS" id="BAB02651"/>
    </conflict>
</comment>
<feature type="chain" id="PRO_0000425406" description="Protein trichome birefringence-like 41">
    <location>
        <begin position="1"/>
        <end position="356"/>
    </location>
</feature>
<feature type="transmembrane region" description="Helical; Signal-anchor for type II membrane protein" evidence="3">
    <location>
        <begin position="12"/>
        <end position="31"/>
    </location>
</feature>
<feature type="short sequence motif" description="GDS motif">
    <location>
        <begin position="107"/>
        <end position="109"/>
    </location>
</feature>
<feature type="short sequence motif" description="DCXHWCLPGXXDXWN motif">
    <location>
        <begin position="333"/>
        <end position="347"/>
    </location>
</feature>
<feature type="splice variant" id="VSP_053696" description="In isoform 2." evidence="4">
    <location>
        <begin position="1"/>
        <end position="103"/>
    </location>
</feature>
<feature type="sequence conflict" description="In Ref. 4; BAH20432." evidence="5" ref="4">
    <original>K</original>
    <variation>E</variation>
    <location>
        <position position="152"/>
    </location>
</feature>
<reference key="1">
    <citation type="journal article" date="2000" name="DNA Res.">
        <title>Structural analysis of Arabidopsis thaliana chromosome 3. II. Sequence features of the 4,251,695 bp regions covered by 90 P1, TAC and BAC clones.</title>
        <authorList>
            <person name="Kaneko T."/>
            <person name="Katoh T."/>
            <person name="Sato S."/>
            <person name="Nakamura Y."/>
            <person name="Asamizu E."/>
            <person name="Tabata S."/>
        </authorList>
    </citation>
    <scope>NUCLEOTIDE SEQUENCE [LARGE SCALE GENOMIC DNA]</scope>
    <source>
        <strain>cv. Columbia</strain>
    </source>
</reference>
<reference key="2">
    <citation type="journal article" date="2017" name="Plant J.">
        <title>Araport11: a complete reannotation of the Arabidopsis thaliana reference genome.</title>
        <authorList>
            <person name="Cheng C.Y."/>
            <person name="Krishnakumar V."/>
            <person name="Chan A.P."/>
            <person name="Thibaud-Nissen F."/>
            <person name="Schobel S."/>
            <person name="Town C.D."/>
        </authorList>
    </citation>
    <scope>GENOME REANNOTATION</scope>
    <source>
        <strain>cv. Columbia</strain>
    </source>
</reference>
<reference key="3">
    <citation type="journal article" date="2003" name="Science">
        <title>Empirical analysis of transcriptional activity in the Arabidopsis genome.</title>
        <authorList>
            <person name="Yamada K."/>
            <person name="Lim J."/>
            <person name="Dale J.M."/>
            <person name="Chen H."/>
            <person name="Shinn P."/>
            <person name="Palm C.J."/>
            <person name="Southwick A.M."/>
            <person name="Wu H.C."/>
            <person name="Kim C.J."/>
            <person name="Nguyen M."/>
            <person name="Pham P.K."/>
            <person name="Cheuk R.F."/>
            <person name="Karlin-Newmann G."/>
            <person name="Liu S.X."/>
            <person name="Lam B."/>
            <person name="Sakano H."/>
            <person name="Wu T."/>
            <person name="Yu G."/>
            <person name="Miranda M."/>
            <person name="Quach H.L."/>
            <person name="Tripp M."/>
            <person name="Chang C.H."/>
            <person name="Lee J.M."/>
            <person name="Toriumi M.J."/>
            <person name="Chan M.M."/>
            <person name="Tang C.C."/>
            <person name="Onodera C.S."/>
            <person name="Deng J.M."/>
            <person name="Akiyama K."/>
            <person name="Ansari Y."/>
            <person name="Arakawa T."/>
            <person name="Banh J."/>
            <person name="Banno F."/>
            <person name="Bowser L."/>
            <person name="Brooks S.Y."/>
            <person name="Carninci P."/>
            <person name="Chao Q."/>
            <person name="Choy N."/>
            <person name="Enju A."/>
            <person name="Goldsmith A.D."/>
            <person name="Gurjal M."/>
            <person name="Hansen N.F."/>
            <person name="Hayashizaki Y."/>
            <person name="Johnson-Hopson C."/>
            <person name="Hsuan V.W."/>
            <person name="Iida K."/>
            <person name="Karnes M."/>
            <person name="Khan S."/>
            <person name="Koesema E."/>
            <person name="Ishida J."/>
            <person name="Jiang P.X."/>
            <person name="Jones T."/>
            <person name="Kawai J."/>
            <person name="Kamiya A."/>
            <person name="Meyers C."/>
            <person name="Nakajima M."/>
            <person name="Narusaka M."/>
            <person name="Seki M."/>
            <person name="Sakurai T."/>
            <person name="Satou M."/>
            <person name="Tamse R."/>
            <person name="Vaysberg M."/>
            <person name="Wallender E.K."/>
            <person name="Wong C."/>
            <person name="Yamamura Y."/>
            <person name="Yuan S."/>
            <person name="Shinozaki K."/>
            <person name="Davis R.W."/>
            <person name="Theologis A."/>
            <person name="Ecker J.R."/>
        </authorList>
    </citation>
    <scope>NUCLEOTIDE SEQUENCE [LARGE SCALE MRNA] (ISOFORM 2)</scope>
    <source>
        <strain>cv. Columbia</strain>
    </source>
</reference>
<reference key="4">
    <citation type="journal article" date="2009" name="DNA Res.">
        <title>Analysis of multiple occurrences of alternative splicing events in Arabidopsis thaliana using novel sequenced full-length cDNAs.</title>
        <authorList>
            <person name="Iida K."/>
            <person name="Fukami-Kobayashi K."/>
            <person name="Toyoda A."/>
            <person name="Sakaki Y."/>
            <person name="Kobayashi M."/>
            <person name="Seki M."/>
            <person name="Shinozaki K."/>
        </authorList>
    </citation>
    <scope>NUCLEOTIDE SEQUENCE [LARGE SCALE MRNA] (ISOFORM 1)</scope>
    <source>
        <strain>cv. Columbia</strain>
    </source>
</reference>
<reference key="5">
    <citation type="journal article" date="2007" name="Plant J.">
        <title>Arabidopsis ESK1 encodes a novel regulator of freezing tolerance.</title>
        <authorList>
            <person name="Xin Z."/>
            <person name="Mandaokar A."/>
            <person name="Chen J."/>
            <person name="Last R.L."/>
            <person name="Browse J."/>
        </authorList>
    </citation>
    <scope>GENE FAMILY</scope>
    <source>
        <strain>cv. Columbia</strain>
    </source>
</reference>
<reference key="6">
    <citation type="journal article" date="2010" name="Plant Physiol.">
        <title>TRICHOME BIREFRINGENCE and its homolog AT5G01360 encode plant-specific DUF231 proteins required for cellulose biosynthesis in Arabidopsis.</title>
        <authorList>
            <person name="Bischoff V."/>
            <person name="Nita S."/>
            <person name="Neumetzler L."/>
            <person name="Schindelasch D."/>
            <person name="Urbain A."/>
            <person name="Eshed R."/>
            <person name="Persson S."/>
            <person name="Delmer D."/>
            <person name="Scheible W.R."/>
        </authorList>
    </citation>
    <scope>GENE FAMILY</scope>
    <scope>NOMENCLATURE</scope>
</reference>
<reference key="7">
    <citation type="journal article" date="2010" name="Plant Signal. Behav.">
        <title>Involvement of TBL/DUF231 proteins into cell wall biology.</title>
        <authorList>
            <person name="Bischoff V."/>
            <person name="Selbig J."/>
            <person name="Scheible W.R."/>
        </authorList>
    </citation>
    <scope>3D-STRUCTURE MODELING</scope>
</reference>
<gene>
    <name type="primary">TBL41</name>
    <name type="ordered locus">At3g14850</name>
    <name type="ORF">T21E2.11</name>
</gene>